<accession>Q49XX9</accession>
<protein>
    <recommendedName>
        <fullName evidence="1">Probable glycine dehydrogenase (decarboxylating) subunit 2</fullName>
        <ecNumber evidence="1">1.4.4.2</ecNumber>
    </recommendedName>
    <alternativeName>
        <fullName evidence="1">Glycine cleavage system P-protein subunit 2</fullName>
    </alternativeName>
    <alternativeName>
        <fullName evidence="1">Glycine decarboxylase subunit 2</fullName>
    </alternativeName>
    <alternativeName>
        <fullName evidence="1">Glycine dehydrogenase (aminomethyl-transferring) subunit 2</fullName>
    </alternativeName>
</protein>
<keyword id="KW-0560">Oxidoreductase</keyword>
<keyword id="KW-0663">Pyridoxal phosphate</keyword>
<keyword id="KW-1185">Reference proteome</keyword>
<dbReference type="EC" id="1.4.4.2" evidence="1"/>
<dbReference type="EMBL" id="AP008934">
    <property type="protein sequence ID" value="BAE18365.1"/>
    <property type="molecule type" value="Genomic_DNA"/>
</dbReference>
<dbReference type="RefSeq" id="WP_011303029.1">
    <property type="nucleotide sequence ID" value="NZ_MTGA01000038.1"/>
</dbReference>
<dbReference type="SMR" id="Q49XX9"/>
<dbReference type="GeneID" id="3616987"/>
<dbReference type="KEGG" id="ssp:SSP1220"/>
<dbReference type="PATRIC" id="fig|342451.11.peg.1219"/>
<dbReference type="eggNOG" id="COG1003">
    <property type="taxonomic scope" value="Bacteria"/>
</dbReference>
<dbReference type="HOGENOM" id="CLU_004620_5_0_9"/>
<dbReference type="OrthoDB" id="9801272at2"/>
<dbReference type="Proteomes" id="UP000006371">
    <property type="component" value="Chromosome"/>
</dbReference>
<dbReference type="GO" id="GO:0005829">
    <property type="term" value="C:cytosol"/>
    <property type="evidence" value="ECO:0007669"/>
    <property type="project" value="TreeGrafter"/>
</dbReference>
<dbReference type="GO" id="GO:0005960">
    <property type="term" value="C:glycine cleavage complex"/>
    <property type="evidence" value="ECO:0007669"/>
    <property type="project" value="TreeGrafter"/>
</dbReference>
<dbReference type="GO" id="GO:0016594">
    <property type="term" value="F:glycine binding"/>
    <property type="evidence" value="ECO:0007669"/>
    <property type="project" value="TreeGrafter"/>
</dbReference>
<dbReference type="GO" id="GO:0004375">
    <property type="term" value="F:glycine dehydrogenase (decarboxylating) activity"/>
    <property type="evidence" value="ECO:0007669"/>
    <property type="project" value="UniProtKB-EC"/>
</dbReference>
<dbReference type="GO" id="GO:0030170">
    <property type="term" value="F:pyridoxal phosphate binding"/>
    <property type="evidence" value="ECO:0007669"/>
    <property type="project" value="TreeGrafter"/>
</dbReference>
<dbReference type="GO" id="GO:0019464">
    <property type="term" value="P:glycine decarboxylation via glycine cleavage system"/>
    <property type="evidence" value="ECO:0007669"/>
    <property type="project" value="UniProtKB-UniRule"/>
</dbReference>
<dbReference type="CDD" id="cd00613">
    <property type="entry name" value="GDC-P"/>
    <property type="match status" value="1"/>
</dbReference>
<dbReference type="FunFam" id="3.40.640.10:FF:000034">
    <property type="entry name" value="Probable glycine dehydrogenase (decarboxylating) subunit 2"/>
    <property type="match status" value="1"/>
</dbReference>
<dbReference type="FunFam" id="3.90.1150.10:FF:000014">
    <property type="entry name" value="Probable glycine dehydrogenase (decarboxylating) subunit 2"/>
    <property type="match status" value="1"/>
</dbReference>
<dbReference type="Gene3D" id="6.20.440.10">
    <property type="match status" value="1"/>
</dbReference>
<dbReference type="Gene3D" id="3.90.1150.10">
    <property type="entry name" value="Aspartate Aminotransferase, domain 1"/>
    <property type="match status" value="1"/>
</dbReference>
<dbReference type="Gene3D" id="3.40.640.10">
    <property type="entry name" value="Type I PLP-dependent aspartate aminotransferase-like (Major domain)"/>
    <property type="match status" value="1"/>
</dbReference>
<dbReference type="HAMAP" id="MF_00713">
    <property type="entry name" value="GcvPB"/>
    <property type="match status" value="1"/>
</dbReference>
<dbReference type="InterPro" id="IPR000192">
    <property type="entry name" value="Aminotrans_V_dom"/>
</dbReference>
<dbReference type="InterPro" id="IPR023012">
    <property type="entry name" value="GcvPB"/>
</dbReference>
<dbReference type="InterPro" id="IPR049316">
    <property type="entry name" value="GDC-P_C"/>
</dbReference>
<dbReference type="InterPro" id="IPR020581">
    <property type="entry name" value="GDC_P"/>
</dbReference>
<dbReference type="InterPro" id="IPR015424">
    <property type="entry name" value="PyrdxlP-dep_Trfase"/>
</dbReference>
<dbReference type="InterPro" id="IPR015421">
    <property type="entry name" value="PyrdxlP-dep_Trfase_major"/>
</dbReference>
<dbReference type="InterPro" id="IPR015422">
    <property type="entry name" value="PyrdxlP-dep_Trfase_small"/>
</dbReference>
<dbReference type="NCBIfam" id="NF003346">
    <property type="entry name" value="PRK04366.1"/>
    <property type="match status" value="1"/>
</dbReference>
<dbReference type="PANTHER" id="PTHR11773:SF1">
    <property type="entry name" value="GLYCINE DEHYDROGENASE (DECARBOXYLATING), MITOCHONDRIAL"/>
    <property type="match status" value="1"/>
</dbReference>
<dbReference type="PANTHER" id="PTHR11773">
    <property type="entry name" value="GLYCINE DEHYDROGENASE, DECARBOXYLATING"/>
    <property type="match status" value="1"/>
</dbReference>
<dbReference type="Pfam" id="PF00266">
    <property type="entry name" value="Aminotran_5"/>
    <property type="match status" value="1"/>
</dbReference>
<dbReference type="Pfam" id="PF21478">
    <property type="entry name" value="GcvP2_C"/>
    <property type="match status" value="1"/>
</dbReference>
<dbReference type="SUPFAM" id="SSF53383">
    <property type="entry name" value="PLP-dependent transferases"/>
    <property type="match status" value="1"/>
</dbReference>
<organism>
    <name type="scientific">Staphylococcus saprophyticus subsp. saprophyticus (strain ATCC 15305 / DSM 20229 / NCIMB 8711 / NCTC 7292 / S-41)</name>
    <dbReference type="NCBI Taxonomy" id="342451"/>
    <lineage>
        <taxon>Bacteria</taxon>
        <taxon>Bacillati</taxon>
        <taxon>Bacillota</taxon>
        <taxon>Bacilli</taxon>
        <taxon>Bacillales</taxon>
        <taxon>Staphylococcaceae</taxon>
        <taxon>Staphylococcus</taxon>
    </lineage>
</organism>
<gene>
    <name evidence="1" type="primary">gcvPB</name>
    <name type="ordered locus">SSP1220</name>
</gene>
<comment type="function">
    <text evidence="1">The glycine cleavage system catalyzes the degradation of glycine. The P protein binds the alpha-amino group of glycine through its pyridoxal phosphate cofactor; CO(2) is released and the remaining methylamine moiety is then transferred to the lipoamide cofactor of the H protein.</text>
</comment>
<comment type="catalytic activity">
    <reaction evidence="1">
        <text>N(6)-[(R)-lipoyl]-L-lysyl-[glycine-cleavage complex H protein] + glycine + H(+) = N(6)-[(R)-S(8)-aminomethyldihydrolipoyl]-L-lysyl-[glycine-cleavage complex H protein] + CO2</text>
        <dbReference type="Rhea" id="RHEA:24304"/>
        <dbReference type="Rhea" id="RHEA-COMP:10494"/>
        <dbReference type="Rhea" id="RHEA-COMP:10495"/>
        <dbReference type="ChEBI" id="CHEBI:15378"/>
        <dbReference type="ChEBI" id="CHEBI:16526"/>
        <dbReference type="ChEBI" id="CHEBI:57305"/>
        <dbReference type="ChEBI" id="CHEBI:83099"/>
        <dbReference type="ChEBI" id="CHEBI:83143"/>
        <dbReference type="EC" id="1.4.4.2"/>
    </reaction>
</comment>
<comment type="cofactor">
    <cofactor evidence="1">
        <name>pyridoxal 5'-phosphate</name>
        <dbReference type="ChEBI" id="CHEBI:597326"/>
    </cofactor>
</comment>
<comment type="subunit">
    <text evidence="1">The glycine cleavage system is composed of four proteins: P, T, L and H. In this organism, the P 'protein' is a heterodimer of two subunits.</text>
</comment>
<comment type="similarity">
    <text evidence="1">Belongs to the GcvP family. C-terminal subunit subfamily.</text>
</comment>
<name>GCSPB_STAS1</name>
<sequence length="492" mass="55035">MVVSKSSPLIFERSKKGRYAYSLPKKEIDNGAVEKLLDDKFIRKNKAELPEVAELDLVRHYTELSNKNFGVDSGFYPLGSCTMKYNPKINEKIARIPGFAESHPLQDESQVQGSLEIIHSLQEELKEITGMDEVTLQPAAGAHGEWTALMIFKAFHQKNGEGHRDEVIVPDSAHGTNPASAAFAGFKAVTVKSNERGEVDIDDLKRVVNENTAAIMLTNPNTLGIFEKNIMDIRNIVHEAGGLLYYDGANLNAIMDKVRPGDMGFDAVHLNLHKTFTGPHGGGGPGSGPVGVKKELASFLPKPMVVKEDDVYKYDNDIENSIGRVKPFYGNFGIYLRAYTYIRTMGNKGLEEVSEAAVLNANYIKARLKDHFEIPYPQYCKHEFVLSGSKQKEHGVRTLDMAKRLLDFGVHPPTIYFPLNVEEGMMIEPTETESKETLDYFCDKMIEIANEAKEDPDKVLEAPHTTIIDRLDETKAARQPVLKFENLRSEKE</sequence>
<evidence type="ECO:0000255" key="1">
    <source>
        <dbReference type="HAMAP-Rule" id="MF_00713"/>
    </source>
</evidence>
<reference key="1">
    <citation type="journal article" date="2005" name="Proc. Natl. Acad. Sci. U.S.A.">
        <title>Whole genome sequence of Staphylococcus saprophyticus reveals the pathogenesis of uncomplicated urinary tract infection.</title>
        <authorList>
            <person name="Kuroda M."/>
            <person name="Yamashita A."/>
            <person name="Hirakawa H."/>
            <person name="Kumano M."/>
            <person name="Morikawa K."/>
            <person name="Higashide M."/>
            <person name="Maruyama A."/>
            <person name="Inose Y."/>
            <person name="Matoba K."/>
            <person name="Toh H."/>
            <person name="Kuhara S."/>
            <person name="Hattori M."/>
            <person name="Ohta T."/>
        </authorList>
    </citation>
    <scope>NUCLEOTIDE SEQUENCE [LARGE SCALE GENOMIC DNA]</scope>
    <source>
        <strain>ATCC 15305 / DSM 20229 / NCIMB 8711 / NCTC 7292 / S-41</strain>
    </source>
</reference>
<proteinExistence type="inferred from homology"/>
<feature type="chain" id="PRO_0000167020" description="Probable glycine dehydrogenase (decarboxylating) subunit 2">
    <location>
        <begin position="1"/>
        <end position="492"/>
    </location>
</feature>
<feature type="modified residue" description="N6-(pyridoxal phosphate)lysine" evidence="1">
    <location>
        <position position="274"/>
    </location>
</feature>